<feature type="chain" id="PRO_1000032031" description="Elongation factor 4">
    <location>
        <begin position="1"/>
        <end position="603"/>
    </location>
</feature>
<feature type="domain" description="tr-type G">
    <location>
        <begin position="2"/>
        <end position="184"/>
    </location>
</feature>
<feature type="binding site" evidence="1">
    <location>
        <begin position="14"/>
        <end position="19"/>
    </location>
    <ligand>
        <name>GTP</name>
        <dbReference type="ChEBI" id="CHEBI:37565"/>
    </ligand>
</feature>
<feature type="binding site" evidence="1">
    <location>
        <begin position="131"/>
        <end position="134"/>
    </location>
    <ligand>
        <name>GTP</name>
        <dbReference type="ChEBI" id="CHEBI:37565"/>
    </ligand>
</feature>
<keyword id="KW-0997">Cell inner membrane</keyword>
<keyword id="KW-1003">Cell membrane</keyword>
<keyword id="KW-0342">GTP-binding</keyword>
<keyword id="KW-0378">Hydrolase</keyword>
<keyword id="KW-0472">Membrane</keyword>
<keyword id="KW-0547">Nucleotide-binding</keyword>
<keyword id="KW-0648">Protein biosynthesis</keyword>
<keyword id="KW-1185">Reference proteome</keyword>
<comment type="function">
    <text evidence="1">Required for accurate and efficient protein synthesis under certain stress conditions. May act as a fidelity factor of the translation reaction, by catalyzing a one-codon backward translocation of tRNAs on improperly translocated ribosomes. Back-translocation proceeds from a post-translocation (POST) complex to a pre-translocation (PRE) complex, thus giving elongation factor G a second chance to translocate the tRNAs correctly. Binds to ribosomes in a GTP-dependent manner.</text>
</comment>
<comment type="catalytic activity">
    <reaction evidence="1">
        <text>GTP + H2O = GDP + phosphate + H(+)</text>
        <dbReference type="Rhea" id="RHEA:19669"/>
        <dbReference type="ChEBI" id="CHEBI:15377"/>
        <dbReference type="ChEBI" id="CHEBI:15378"/>
        <dbReference type="ChEBI" id="CHEBI:37565"/>
        <dbReference type="ChEBI" id="CHEBI:43474"/>
        <dbReference type="ChEBI" id="CHEBI:58189"/>
        <dbReference type="EC" id="3.6.5.n1"/>
    </reaction>
</comment>
<comment type="subcellular location">
    <subcellularLocation>
        <location evidence="1">Cell inner membrane</location>
        <topology evidence="1">Peripheral membrane protein</topology>
        <orientation evidence="1">Cytoplasmic side</orientation>
    </subcellularLocation>
</comment>
<comment type="similarity">
    <text evidence="1">Belongs to the TRAFAC class translation factor GTPase superfamily. Classic translation factor GTPase family. LepA subfamily.</text>
</comment>
<accession>A1VRT5</accession>
<name>LEPA_POLNA</name>
<proteinExistence type="inferred from homology"/>
<dbReference type="EC" id="3.6.5.n1" evidence="1"/>
<dbReference type="EMBL" id="CP000529">
    <property type="protein sequence ID" value="ABM38363.1"/>
    <property type="molecule type" value="Genomic_DNA"/>
</dbReference>
<dbReference type="RefSeq" id="WP_011802435.1">
    <property type="nucleotide sequence ID" value="NC_008781.1"/>
</dbReference>
<dbReference type="SMR" id="A1VRT5"/>
<dbReference type="STRING" id="365044.Pnap_3064"/>
<dbReference type="KEGG" id="pna:Pnap_3064"/>
<dbReference type="eggNOG" id="COG0481">
    <property type="taxonomic scope" value="Bacteria"/>
</dbReference>
<dbReference type="HOGENOM" id="CLU_009995_3_3_4"/>
<dbReference type="OrthoDB" id="9801472at2"/>
<dbReference type="Proteomes" id="UP000000644">
    <property type="component" value="Chromosome"/>
</dbReference>
<dbReference type="GO" id="GO:0005886">
    <property type="term" value="C:plasma membrane"/>
    <property type="evidence" value="ECO:0007669"/>
    <property type="project" value="UniProtKB-SubCell"/>
</dbReference>
<dbReference type="GO" id="GO:0005525">
    <property type="term" value="F:GTP binding"/>
    <property type="evidence" value="ECO:0007669"/>
    <property type="project" value="UniProtKB-UniRule"/>
</dbReference>
<dbReference type="GO" id="GO:0003924">
    <property type="term" value="F:GTPase activity"/>
    <property type="evidence" value="ECO:0007669"/>
    <property type="project" value="UniProtKB-UniRule"/>
</dbReference>
<dbReference type="GO" id="GO:0097216">
    <property type="term" value="F:guanosine tetraphosphate binding"/>
    <property type="evidence" value="ECO:0007669"/>
    <property type="project" value="UniProtKB-ARBA"/>
</dbReference>
<dbReference type="GO" id="GO:0043022">
    <property type="term" value="F:ribosome binding"/>
    <property type="evidence" value="ECO:0007669"/>
    <property type="project" value="UniProtKB-UniRule"/>
</dbReference>
<dbReference type="GO" id="GO:0003746">
    <property type="term" value="F:translation elongation factor activity"/>
    <property type="evidence" value="ECO:0007669"/>
    <property type="project" value="UniProtKB-UniRule"/>
</dbReference>
<dbReference type="GO" id="GO:0045727">
    <property type="term" value="P:positive regulation of translation"/>
    <property type="evidence" value="ECO:0007669"/>
    <property type="project" value="UniProtKB-UniRule"/>
</dbReference>
<dbReference type="CDD" id="cd16260">
    <property type="entry name" value="EF4_III"/>
    <property type="match status" value="1"/>
</dbReference>
<dbReference type="CDD" id="cd01890">
    <property type="entry name" value="LepA"/>
    <property type="match status" value="1"/>
</dbReference>
<dbReference type="CDD" id="cd03709">
    <property type="entry name" value="lepA_C"/>
    <property type="match status" value="1"/>
</dbReference>
<dbReference type="FunFam" id="3.40.50.300:FF:000078">
    <property type="entry name" value="Elongation factor 4"/>
    <property type="match status" value="1"/>
</dbReference>
<dbReference type="FunFam" id="2.40.30.10:FF:000015">
    <property type="entry name" value="Translation factor GUF1, mitochondrial"/>
    <property type="match status" value="1"/>
</dbReference>
<dbReference type="FunFam" id="3.30.70.240:FF:000007">
    <property type="entry name" value="Translation factor GUF1, mitochondrial"/>
    <property type="match status" value="1"/>
</dbReference>
<dbReference type="FunFam" id="3.30.70.2570:FF:000001">
    <property type="entry name" value="Translation factor GUF1, mitochondrial"/>
    <property type="match status" value="1"/>
</dbReference>
<dbReference type="FunFam" id="3.30.70.870:FF:000004">
    <property type="entry name" value="Translation factor GUF1, mitochondrial"/>
    <property type="match status" value="1"/>
</dbReference>
<dbReference type="Gene3D" id="3.30.70.240">
    <property type="match status" value="1"/>
</dbReference>
<dbReference type="Gene3D" id="3.30.70.2570">
    <property type="entry name" value="Elongation factor 4, C-terminal domain"/>
    <property type="match status" value="1"/>
</dbReference>
<dbReference type="Gene3D" id="3.30.70.870">
    <property type="entry name" value="Elongation Factor G (Translational Gtpase), domain 3"/>
    <property type="match status" value="1"/>
</dbReference>
<dbReference type="Gene3D" id="3.40.50.300">
    <property type="entry name" value="P-loop containing nucleotide triphosphate hydrolases"/>
    <property type="match status" value="1"/>
</dbReference>
<dbReference type="Gene3D" id="2.40.30.10">
    <property type="entry name" value="Translation factors"/>
    <property type="match status" value="1"/>
</dbReference>
<dbReference type="HAMAP" id="MF_00071">
    <property type="entry name" value="LepA"/>
    <property type="match status" value="1"/>
</dbReference>
<dbReference type="InterPro" id="IPR006297">
    <property type="entry name" value="EF-4"/>
</dbReference>
<dbReference type="InterPro" id="IPR035647">
    <property type="entry name" value="EFG_III/V"/>
</dbReference>
<dbReference type="InterPro" id="IPR000640">
    <property type="entry name" value="EFG_V-like"/>
</dbReference>
<dbReference type="InterPro" id="IPR004161">
    <property type="entry name" value="EFTu-like_2"/>
</dbReference>
<dbReference type="InterPro" id="IPR031157">
    <property type="entry name" value="G_TR_CS"/>
</dbReference>
<dbReference type="InterPro" id="IPR038363">
    <property type="entry name" value="LepA_C_sf"/>
</dbReference>
<dbReference type="InterPro" id="IPR013842">
    <property type="entry name" value="LepA_CTD"/>
</dbReference>
<dbReference type="InterPro" id="IPR035654">
    <property type="entry name" value="LepA_IV"/>
</dbReference>
<dbReference type="InterPro" id="IPR027417">
    <property type="entry name" value="P-loop_NTPase"/>
</dbReference>
<dbReference type="InterPro" id="IPR005225">
    <property type="entry name" value="Small_GTP-bd"/>
</dbReference>
<dbReference type="InterPro" id="IPR000795">
    <property type="entry name" value="T_Tr_GTP-bd_dom"/>
</dbReference>
<dbReference type="InterPro" id="IPR009000">
    <property type="entry name" value="Transl_B-barrel_sf"/>
</dbReference>
<dbReference type="NCBIfam" id="TIGR01393">
    <property type="entry name" value="lepA"/>
    <property type="match status" value="1"/>
</dbReference>
<dbReference type="NCBIfam" id="TIGR00231">
    <property type="entry name" value="small_GTP"/>
    <property type="match status" value="1"/>
</dbReference>
<dbReference type="PANTHER" id="PTHR43512:SF4">
    <property type="entry name" value="TRANSLATION FACTOR GUF1 HOMOLOG, CHLOROPLASTIC"/>
    <property type="match status" value="1"/>
</dbReference>
<dbReference type="PANTHER" id="PTHR43512">
    <property type="entry name" value="TRANSLATION FACTOR GUF1-RELATED"/>
    <property type="match status" value="1"/>
</dbReference>
<dbReference type="Pfam" id="PF00679">
    <property type="entry name" value="EFG_C"/>
    <property type="match status" value="1"/>
</dbReference>
<dbReference type="Pfam" id="PF00009">
    <property type="entry name" value="GTP_EFTU"/>
    <property type="match status" value="1"/>
</dbReference>
<dbReference type="Pfam" id="PF03144">
    <property type="entry name" value="GTP_EFTU_D2"/>
    <property type="match status" value="1"/>
</dbReference>
<dbReference type="Pfam" id="PF06421">
    <property type="entry name" value="LepA_C"/>
    <property type="match status" value="1"/>
</dbReference>
<dbReference type="PRINTS" id="PR00315">
    <property type="entry name" value="ELONGATNFCT"/>
</dbReference>
<dbReference type="SMART" id="SM00838">
    <property type="entry name" value="EFG_C"/>
    <property type="match status" value="1"/>
</dbReference>
<dbReference type="SUPFAM" id="SSF54980">
    <property type="entry name" value="EF-G C-terminal domain-like"/>
    <property type="match status" value="2"/>
</dbReference>
<dbReference type="SUPFAM" id="SSF52540">
    <property type="entry name" value="P-loop containing nucleoside triphosphate hydrolases"/>
    <property type="match status" value="1"/>
</dbReference>
<dbReference type="SUPFAM" id="SSF50447">
    <property type="entry name" value="Translation proteins"/>
    <property type="match status" value="1"/>
</dbReference>
<dbReference type="PROSITE" id="PS00301">
    <property type="entry name" value="G_TR_1"/>
    <property type="match status" value="1"/>
</dbReference>
<dbReference type="PROSITE" id="PS51722">
    <property type="entry name" value="G_TR_2"/>
    <property type="match status" value="1"/>
</dbReference>
<reference key="1">
    <citation type="journal article" date="2009" name="Environ. Microbiol.">
        <title>The genome of Polaromonas naphthalenivorans strain CJ2, isolated from coal tar-contaminated sediment, reveals physiological and metabolic versatility and evolution through extensive horizontal gene transfer.</title>
        <authorList>
            <person name="Yagi J.M."/>
            <person name="Sims D."/>
            <person name="Brettin T."/>
            <person name="Bruce D."/>
            <person name="Madsen E.L."/>
        </authorList>
    </citation>
    <scope>NUCLEOTIDE SEQUENCE [LARGE SCALE GENOMIC DNA]</scope>
    <source>
        <strain>CJ2</strain>
    </source>
</reference>
<protein>
    <recommendedName>
        <fullName evidence="1">Elongation factor 4</fullName>
        <shortName evidence="1">EF-4</shortName>
        <ecNumber evidence="1">3.6.5.n1</ecNumber>
    </recommendedName>
    <alternativeName>
        <fullName evidence="1">Ribosomal back-translocase LepA</fullName>
    </alternativeName>
</protein>
<organism>
    <name type="scientific">Polaromonas naphthalenivorans (strain CJ2)</name>
    <dbReference type="NCBI Taxonomy" id="365044"/>
    <lineage>
        <taxon>Bacteria</taxon>
        <taxon>Pseudomonadati</taxon>
        <taxon>Pseudomonadota</taxon>
        <taxon>Betaproteobacteria</taxon>
        <taxon>Burkholderiales</taxon>
        <taxon>Comamonadaceae</taxon>
        <taxon>Polaromonas</taxon>
    </lineage>
</organism>
<gene>
    <name evidence="1" type="primary">lepA</name>
    <name type="ordered locus">Pnap_3064</name>
</gene>
<sequence length="603" mass="66007">MNHIRNFSIIAHIDHGKSTLADRLIQRCGGLQDREMSAQVLDSMDIEKERGITIKAQTASLKYKALDGQVYNLNLIDTPGHVDFSYEVSRSLSACEGALLVVDASQGVEAQTVANCYTALDLGVTVVPVLNKMDLPQADPDNAKQEIEEVIGIDATDAIPCSAKTGMGIDEILEAVVALIPAPKGNPDAALRAMIIDSWYDAYVGVVMLVRVVDGRLAKGDRIKLMASEATYNAEQLGVFTPHTEARQALEAGEVGFVIAGIKELQAARVGDTVTLIKGGTGGAAFTATEALPGFKEIQPQVFAGLYPSEASEYESLRDALEKLKLNDASLHYEPEVSEALGFGFRCGFLGLLHMEIVQERLEREFDQDLITTAPSVVYEVLKADGTTIKVENPSKIPDAGRVNEIREPIVTVHLYMPQDYVGAVMTLANQKRGVQLNMAYHGKQVMLTYEMPLGEIVLDFFDKLKSVSRGYASMDYEFKEFRASDVVKVDILLNGEKVDALSIIVHRSQSAYRGRAVVAKMREIISRQQFDVAIQAAIGANIIARETIKALRKNVIAKCYGGDISRKKKLLEKQKAGKKRMKQIGSVEVPQEAFLAILQVED</sequence>
<evidence type="ECO:0000255" key="1">
    <source>
        <dbReference type="HAMAP-Rule" id="MF_00071"/>
    </source>
</evidence>